<name>FBX16_HUMAN</name>
<protein>
    <recommendedName>
        <fullName>F-box only protein 16</fullName>
    </recommendedName>
</protein>
<comment type="function">
    <text>Probably recognizes and binds to some phosphorylated proteins and promotes their ubiquitination and degradation.</text>
</comment>
<comment type="subunit">
    <text evidence="1">Part of a SCF (SKP1-cullin-F-box) protein ligase complex.</text>
</comment>
<comment type="interaction">
    <interactant intactId="EBI-12063229">
        <id>Q8IX29</id>
    </interactant>
    <interactant intactId="EBI-8639312">
        <id>P25800</id>
        <label>LMO1</label>
    </interactant>
    <organismsDiffer>false</organismsDiffer>
    <experiments>3</experiments>
</comment>
<comment type="interaction">
    <interactant intactId="EBI-12063229">
        <id>Q8IX29</id>
    </interactant>
    <interactant intactId="EBI-10288852">
        <id>Q9UBU8-2</id>
        <label>MORF4L1</label>
    </interactant>
    <organismsDiffer>false</organismsDiffer>
    <experiments>3</experiments>
</comment>
<comment type="interaction">
    <interactant intactId="EBI-12063229">
        <id>Q8IX29</id>
    </interactant>
    <interactant intactId="EBI-399257">
        <id>Q15014</id>
        <label>MORF4L2</label>
    </interactant>
    <organismsDiffer>false</organismsDiffer>
    <experiments>3</experiments>
</comment>
<comment type="interaction">
    <interactant intactId="EBI-12063229">
        <id>Q8IX29</id>
    </interactant>
    <interactant intactId="EBI-301889">
        <id>Q9UKK6</id>
        <label>NXT1</label>
    </interactant>
    <organismsDiffer>false</organismsDiffer>
    <experiments>5</experiments>
</comment>
<comment type="interaction">
    <interactant intactId="EBI-12063229">
        <id>Q8IX29</id>
    </interactant>
    <interactant intactId="EBI-2130429">
        <id>Q9BYV2</id>
        <label>TRIM54</label>
    </interactant>
    <organismsDiffer>false</organismsDiffer>
    <experiments>3</experiments>
</comment>
<comment type="alternative products">
    <event type="alternative splicing"/>
    <isoform>
        <id>Q8IX29-1</id>
        <name>1</name>
        <sequence type="displayed"/>
    </isoform>
    <isoform>
        <id>Q8IX29-2</id>
        <name>2</name>
        <sequence type="described" ref="VSP_045600"/>
    </isoform>
</comment>
<comment type="tissue specificity">
    <text evidence="4">Expressed in heart, spleen and colon.</text>
</comment>
<dbReference type="EMBL" id="AF453435">
    <property type="protein sequence ID" value="AAN76812.1"/>
    <property type="molecule type" value="mRNA"/>
</dbReference>
<dbReference type="EMBL" id="AC025871">
    <property type="status" value="NOT_ANNOTATED_CDS"/>
    <property type="molecule type" value="Genomic_DNA"/>
</dbReference>
<dbReference type="EMBL" id="BC074986">
    <property type="protein sequence ID" value="AAH74986.1"/>
    <property type="molecule type" value="mRNA"/>
</dbReference>
<dbReference type="EMBL" id="BC102026">
    <property type="protein sequence ID" value="AAI02027.1"/>
    <property type="molecule type" value="mRNA"/>
</dbReference>
<dbReference type="EMBL" id="BC102027">
    <property type="protein sequence ID" value="AAI02028.1"/>
    <property type="molecule type" value="mRNA"/>
</dbReference>
<dbReference type="EMBL" id="BC102028">
    <property type="protein sequence ID" value="AAI02029.1"/>
    <property type="molecule type" value="mRNA"/>
</dbReference>
<dbReference type="CCDS" id="CCDS59099.1">
    <molecule id="Q8IX29-2"/>
</dbReference>
<dbReference type="CCDS" id="CCDS6068.1">
    <molecule id="Q8IX29-1"/>
</dbReference>
<dbReference type="RefSeq" id="NP_001245140.1">
    <molecule id="Q8IX29-2"/>
    <property type="nucleotide sequence ID" value="NM_001258211.2"/>
</dbReference>
<dbReference type="RefSeq" id="NP_758954.1">
    <molecule id="Q8IX29-1"/>
    <property type="nucleotide sequence ID" value="NM_172366.4"/>
</dbReference>
<dbReference type="SMR" id="Q8IX29"/>
<dbReference type="BioGRID" id="127606">
    <property type="interactions" value="17"/>
</dbReference>
<dbReference type="ComplexPortal" id="CPX-7926">
    <property type="entry name" value="SCF E3 ubiquitin ligase complex, FBXO16 variant"/>
</dbReference>
<dbReference type="FunCoup" id="Q8IX29">
    <property type="interactions" value="99"/>
</dbReference>
<dbReference type="IntAct" id="Q8IX29">
    <property type="interactions" value="12"/>
</dbReference>
<dbReference type="STRING" id="9606.ENSP00000369604"/>
<dbReference type="iPTMnet" id="Q8IX29"/>
<dbReference type="PhosphoSitePlus" id="Q8IX29"/>
<dbReference type="BioMuta" id="FBXO16"/>
<dbReference type="DMDM" id="30580423"/>
<dbReference type="MassIVE" id="Q8IX29"/>
<dbReference type="PaxDb" id="9606-ENSP00000369604"/>
<dbReference type="PeptideAtlas" id="Q8IX29"/>
<dbReference type="ProteomicsDB" id="61869"/>
<dbReference type="ProteomicsDB" id="70969">
    <molecule id="Q8IX29-1"/>
</dbReference>
<dbReference type="Antibodypedia" id="23118">
    <property type="antibodies" value="106 antibodies from 15 providers"/>
</dbReference>
<dbReference type="DNASU" id="157574"/>
<dbReference type="Ensembl" id="ENST00000380254.7">
    <molecule id="Q8IX29-1"/>
    <property type="protein sequence ID" value="ENSP00000369604.2"/>
    <property type="gene ID" value="ENSG00000214050.8"/>
</dbReference>
<dbReference type="Ensembl" id="ENST00000518734.5">
    <molecule id="Q8IX29-2"/>
    <property type="protein sequence ID" value="ENSP00000429687.1"/>
    <property type="gene ID" value="ENSG00000214050.8"/>
</dbReference>
<dbReference type="GeneID" id="157574"/>
<dbReference type="KEGG" id="hsa:157574"/>
<dbReference type="MANE-Select" id="ENST00000380254.7">
    <property type="protein sequence ID" value="ENSP00000369604.2"/>
    <property type="RefSeq nucleotide sequence ID" value="NM_172366.4"/>
    <property type="RefSeq protein sequence ID" value="NP_758954.1"/>
</dbReference>
<dbReference type="UCSC" id="uc003xgu.5">
    <molecule id="Q8IX29-1"/>
    <property type="organism name" value="human"/>
</dbReference>
<dbReference type="AGR" id="HGNC:13618"/>
<dbReference type="CTD" id="157574"/>
<dbReference type="DisGeNET" id="157574"/>
<dbReference type="GeneCards" id="FBXO16"/>
<dbReference type="HGNC" id="HGNC:13618">
    <property type="gene designation" value="FBXO16"/>
</dbReference>
<dbReference type="HPA" id="ENSG00000214050">
    <property type="expression patterns" value="Tissue enhanced (epididymis, pituitary gland)"/>
</dbReference>
<dbReference type="MIM" id="608519">
    <property type="type" value="gene"/>
</dbReference>
<dbReference type="neXtProt" id="NX_Q8IX29"/>
<dbReference type="OpenTargets" id="ENSG00000214050"/>
<dbReference type="PharmGKB" id="PA134901223"/>
<dbReference type="VEuPathDB" id="HostDB:ENSG00000214050"/>
<dbReference type="eggNOG" id="KOG0274">
    <property type="taxonomic scope" value="Eukaryota"/>
</dbReference>
<dbReference type="GeneTree" id="ENSGT00940000159021"/>
<dbReference type="HOGENOM" id="CLU_065593_0_0_1"/>
<dbReference type="InParanoid" id="Q8IX29"/>
<dbReference type="OMA" id="DRWSDGQ"/>
<dbReference type="OrthoDB" id="10257471at2759"/>
<dbReference type="PAN-GO" id="Q8IX29">
    <property type="GO annotations" value="0 GO annotations based on evolutionary models"/>
</dbReference>
<dbReference type="PhylomeDB" id="Q8IX29"/>
<dbReference type="TreeFam" id="TF328656"/>
<dbReference type="PathwayCommons" id="Q8IX29"/>
<dbReference type="SignaLink" id="Q8IX29"/>
<dbReference type="BioGRID-ORCS" id="157574">
    <property type="hits" value="7 hits in 1185 CRISPR screens"/>
</dbReference>
<dbReference type="ChiTaRS" id="FBXO16">
    <property type="organism name" value="human"/>
</dbReference>
<dbReference type="GenomeRNAi" id="157574"/>
<dbReference type="Pharos" id="Q8IX29">
    <property type="development level" value="Tdark"/>
</dbReference>
<dbReference type="PRO" id="PR:Q8IX29"/>
<dbReference type="Proteomes" id="UP000005640">
    <property type="component" value="Chromosome 8"/>
</dbReference>
<dbReference type="RNAct" id="Q8IX29">
    <property type="molecule type" value="protein"/>
</dbReference>
<dbReference type="Bgee" id="ENSG00000214050">
    <property type="expression patterns" value="Expressed in adenohypophysis and 118 other cell types or tissues"/>
</dbReference>
<dbReference type="ExpressionAtlas" id="Q8IX29">
    <property type="expression patterns" value="baseline and differential"/>
</dbReference>
<dbReference type="CDD" id="cd22172">
    <property type="entry name" value="F-box_FBXO16"/>
    <property type="match status" value="1"/>
</dbReference>
<dbReference type="Gene3D" id="1.20.1280.50">
    <property type="match status" value="1"/>
</dbReference>
<dbReference type="InterPro" id="IPR036047">
    <property type="entry name" value="F-box-like_dom_sf"/>
</dbReference>
<dbReference type="InterPro" id="IPR001810">
    <property type="entry name" value="F-box_dom"/>
</dbReference>
<dbReference type="InterPro" id="IPR052805">
    <property type="entry name" value="GEF_Ubiquitin-Prot_Reg"/>
</dbReference>
<dbReference type="PANTHER" id="PTHR46857">
    <property type="entry name" value="EPITHELIAL CELL-TRANSFORMING SEQUENCE 2 ONCOGENE-LIKE"/>
    <property type="match status" value="1"/>
</dbReference>
<dbReference type="PANTHER" id="PTHR46857:SF2">
    <property type="entry name" value="F-BOX ONLY PROTEIN 16"/>
    <property type="match status" value="1"/>
</dbReference>
<dbReference type="Pfam" id="PF12937">
    <property type="entry name" value="F-box-like"/>
    <property type="match status" value="1"/>
</dbReference>
<dbReference type="SMART" id="SM00256">
    <property type="entry name" value="FBOX"/>
    <property type="match status" value="1"/>
</dbReference>
<dbReference type="SUPFAM" id="SSF81383">
    <property type="entry name" value="F-box domain"/>
    <property type="match status" value="1"/>
</dbReference>
<dbReference type="PROSITE" id="PS50181">
    <property type="entry name" value="FBOX"/>
    <property type="match status" value="1"/>
</dbReference>
<accession>Q8IX29</accession>
<accession>Q3T1B2</accession>
<accession>Q3T1B3</accession>
<accession>Q3T1B4</accession>
<gene>
    <name type="primary">FBXO16</name>
    <name type="synonym">FBX16</name>
</gene>
<sequence length="292" mass="34588">MMAFAPPKNTDGPKMQTKMSTWTPLNHQLLNDRVFEERRALLGKWFDKWTDSQRRRILTGLLERCSLSQQKFCCRKLQEKIPAEALDFTTKLPRVLSLYIFSFLDPRSLCRCAQVCWHWKNLAELDQLWMLKCLRFNWYINFSPTPFEQGIWKKHYIQMVKELHITKPKTPPKDGFVIADVQLVTSNSPEEKQSPLSAFRSSSSLRKKNNSGEKALPPWRSSDKHPTDIIRFNYLDNRDPMETVQQGRRKRNQMTPDFSRQSHDKKNKLQDRTRLRKAQSMMSRRNPFPLCP</sequence>
<organism>
    <name type="scientific">Homo sapiens</name>
    <name type="common">Human</name>
    <dbReference type="NCBI Taxonomy" id="9606"/>
    <lineage>
        <taxon>Eukaryota</taxon>
        <taxon>Metazoa</taxon>
        <taxon>Chordata</taxon>
        <taxon>Craniata</taxon>
        <taxon>Vertebrata</taxon>
        <taxon>Euteleostomi</taxon>
        <taxon>Mammalia</taxon>
        <taxon>Eutheria</taxon>
        <taxon>Euarchontoglires</taxon>
        <taxon>Primates</taxon>
        <taxon>Haplorrhini</taxon>
        <taxon>Catarrhini</taxon>
        <taxon>Hominidae</taxon>
        <taxon>Homo</taxon>
    </lineage>
</organism>
<keyword id="KW-0025">Alternative splicing</keyword>
<keyword id="KW-1267">Proteomics identification</keyword>
<keyword id="KW-1185">Reference proteome</keyword>
<keyword id="KW-0833">Ubl conjugation pathway</keyword>
<reference key="1">
    <citation type="journal article" date="2002" name="Mol. Cells">
        <title>cDNA cloning and expression analysis of a novel human F-box only protein.</title>
        <authorList>
            <person name="Cheng H."/>
            <person name="Ma Y."/>
            <person name="Ni X."/>
            <person name="Jiang M."/>
            <person name="Guo L."/>
            <person name="Jin W."/>
            <person name="Xu W."/>
            <person name="Cao G."/>
            <person name="Ji C."/>
            <person name="Yin K."/>
            <person name="Gu S."/>
            <person name="Ma Y."/>
            <person name="Xie Y."/>
            <person name="Mao Y."/>
        </authorList>
    </citation>
    <scope>NUCLEOTIDE SEQUENCE [MRNA] (ISOFORM 1)</scope>
    <scope>TISSUE SPECIFICITY</scope>
</reference>
<reference key="2">
    <citation type="journal article" date="2006" name="Nature">
        <title>DNA sequence and analysis of human chromosome 8.</title>
        <authorList>
            <person name="Nusbaum C."/>
            <person name="Mikkelsen T.S."/>
            <person name="Zody M.C."/>
            <person name="Asakawa S."/>
            <person name="Taudien S."/>
            <person name="Garber M."/>
            <person name="Kodira C.D."/>
            <person name="Schueler M.G."/>
            <person name="Shimizu A."/>
            <person name="Whittaker C.A."/>
            <person name="Chang J.L."/>
            <person name="Cuomo C.A."/>
            <person name="Dewar K."/>
            <person name="FitzGerald M.G."/>
            <person name="Yang X."/>
            <person name="Allen N.R."/>
            <person name="Anderson S."/>
            <person name="Asakawa T."/>
            <person name="Blechschmidt K."/>
            <person name="Bloom T."/>
            <person name="Borowsky M.L."/>
            <person name="Butler J."/>
            <person name="Cook A."/>
            <person name="Corum B."/>
            <person name="DeArellano K."/>
            <person name="DeCaprio D."/>
            <person name="Dooley K.T."/>
            <person name="Dorris L. III"/>
            <person name="Engels R."/>
            <person name="Gloeckner G."/>
            <person name="Hafez N."/>
            <person name="Hagopian D.S."/>
            <person name="Hall J.L."/>
            <person name="Ishikawa S.K."/>
            <person name="Jaffe D.B."/>
            <person name="Kamat A."/>
            <person name="Kudoh J."/>
            <person name="Lehmann R."/>
            <person name="Lokitsang T."/>
            <person name="Macdonald P."/>
            <person name="Major J.E."/>
            <person name="Matthews C.D."/>
            <person name="Mauceli E."/>
            <person name="Menzel U."/>
            <person name="Mihalev A.H."/>
            <person name="Minoshima S."/>
            <person name="Murayama Y."/>
            <person name="Naylor J.W."/>
            <person name="Nicol R."/>
            <person name="Nguyen C."/>
            <person name="O'Leary S.B."/>
            <person name="O'Neill K."/>
            <person name="Parker S.C.J."/>
            <person name="Polley A."/>
            <person name="Raymond C.K."/>
            <person name="Reichwald K."/>
            <person name="Rodriguez J."/>
            <person name="Sasaki T."/>
            <person name="Schilhabel M."/>
            <person name="Siddiqui R."/>
            <person name="Smith C.L."/>
            <person name="Sneddon T.P."/>
            <person name="Talamas J.A."/>
            <person name="Tenzin P."/>
            <person name="Topham K."/>
            <person name="Venkataraman V."/>
            <person name="Wen G."/>
            <person name="Yamazaki S."/>
            <person name="Young S.K."/>
            <person name="Zeng Q."/>
            <person name="Zimmer A.R."/>
            <person name="Rosenthal A."/>
            <person name="Birren B.W."/>
            <person name="Platzer M."/>
            <person name="Shimizu N."/>
            <person name="Lander E.S."/>
        </authorList>
    </citation>
    <scope>NUCLEOTIDE SEQUENCE [LARGE SCALE GENOMIC DNA]</scope>
</reference>
<reference key="3">
    <citation type="journal article" date="2004" name="Genome Res.">
        <title>The status, quality, and expansion of the NIH full-length cDNA project: the Mammalian Gene Collection (MGC).</title>
        <authorList>
            <consortium name="The MGC Project Team"/>
        </authorList>
    </citation>
    <scope>NUCLEOTIDE SEQUENCE [LARGE SCALE MRNA] (ISOFORMS 1 AND 2)</scope>
</reference>
<feature type="chain" id="PRO_0000119896" description="F-box only protein 16">
    <location>
        <begin position="1"/>
        <end position="292"/>
    </location>
</feature>
<feature type="domain" description="F-box" evidence="2">
    <location>
        <begin position="86"/>
        <end position="132"/>
    </location>
</feature>
<feature type="region of interest" description="Disordered" evidence="3">
    <location>
        <begin position="188"/>
        <end position="224"/>
    </location>
</feature>
<feature type="region of interest" description="Disordered" evidence="3">
    <location>
        <begin position="238"/>
        <end position="292"/>
    </location>
</feature>
<feature type="compositionally biased region" description="Low complexity" evidence="3">
    <location>
        <begin position="194"/>
        <end position="204"/>
    </location>
</feature>
<feature type="compositionally biased region" description="Basic and acidic residues" evidence="3">
    <location>
        <begin position="260"/>
        <end position="273"/>
    </location>
</feature>
<feature type="splice variant" id="VSP_045600" description="In isoform 2." evidence="5">
    <location>
        <begin position="34"/>
        <end position="45"/>
    </location>
</feature>
<feature type="sequence variant" id="VAR_020409" description="In dbSNP:rs3735726.">
    <original>R</original>
    <variation>Q</variation>
    <location>
        <position position="75"/>
    </location>
</feature>
<feature type="sequence variant" id="VAR_024442" description="In dbSNP:rs1390963.">
    <original>M</original>
    <variation>I</variation>
    <location>
        <position position="254"/>
    </location>
</feature>
<feature type="sequence variant" id="VAR_049041" description="In dbSNP:rs7016831.">
    <original>T</original>
    <variation>N</variation>
    <location>
        <position position="255"/>
    </location>
</feature>
<feature type="sequence conflict" description="In Ref. 3; AAI02028." evidence="6" ref="3">
    <original>MT</original>
    <variation>IN</variation>
    <location>
        <begin position="254"/>
        <end position="255"/>
    </location>
</feature>
<evidence type="ECO:0000250" key="1"/>
<evidence type="ECO:0000255" key="2">
    <source>
        <dbReference type="PROSITE-ProRule" id="PRU00080"/>
    </source>
</evidence>
<evidence type="ECO:0000256" key="3">
    <source>
        <dbReference type="SAM" id="MobiDB-lite"/>
    </source>
</evidence>
<evidence type="ECO:0000269" key="4">
    <source>
    </source>
</evidence>
<evidence type="ECO:0000303" key="5">
    <source>
    </source>
</evidence>
<evidence type="ECO:0000305" key="6"/>
<proteinExistence type="evidence at protein level"/>